<dbReference type="EC" id="6.1.1.11" evidence="1"/>
<dbReference type="EMBL" id="CP001322">
    <property type="protein sequence ID" value="ACL06075.1"/>
    <property type="molecule type" value="Genomic_DNA"/>
</dbReference>
<dbReference type="RefSeq" id="WP_015949121.1">
    <property type="nucleotide sequence ID" value="NC_011768.1"/>
</dbReference>
<dbReference type="SMR" id="B8FNA6"/>
<dbReference type="KEGG" id="dal:Dalk_4396"/>
<dbReference type="eggNOG" id="COG0172">
    <property type="taxonomic scope" value="Bacteria"/>
</dbReference>
<dbReference type="HOGENOM" id="CLU_023797_1_1_7"/>
<dbReference type="UniPathway" id="UPA00906">
    <property type="reaction ID" value="UER00895"/>
</dbReference>
<dbReference type="Proteomes" id="UP000000739">
    <property type="component" value="Chromosome"/>
</dbReference>
<dbReference type="GO" id="GO:0005737">
    <property type="term" value="C:cytoplasm"/>
    <property type="evidence" value="ECO:0007669"/>
    <property type="project" value="UniProtKB-SubCell"/>
</dbReference>
<dbReference type="GO" id="GO:0005524">
    <property type="term" value="F:ATP binding"/>
    <property type="evidence" value="ECO:0007669"/>
    <property type="project" value="UniProtKB-UniRule"/>
</dbReference>
<dbReference type="GO" id="GO:0004828">
    <property type="term" value="F:serine-tRNA ligase activity"/>
    <property type="evidence" value="ECO:0007669"/>
    <property type="project" value="UniProtKB-UniRule"/>
</dbReference>
<dbReference type="GO" id="GO:0016260">
    <property type="term" value="P:selenocysteine biosynthetic process"/>
    <property type="evidence" value="ECO:0007669"/>
    <property type="project" value="UniProtKB-UniRule"/>
</dbReference>
<dbReference type="GO" id="GO:0006434">
    <property type="term" value="P:seryl-tRNA aminoacylation"/>
    <property type="evidence" value="ECO:0007669"/>
    <property type="project" value="UniProtKB-UniRule"/>
</dbReference>
<dbReference type="CDD" id="cd00770">
    <property type="entry name" value="SerRS_core"/>
    <property type="match status" value="1"/>
</dbReference>
<dbReference type="Gene3D" id="3.30.930.10">
    <property type="entry name" value="Bira Bifunctional Protein, Domain 2"/>
    <property type="match status" value="1"/>
</dbReference>
<dbReference type="Gene3D" id="1.10.287.40">
    <property type="entry name" value="Serine-tRNA synthetase, tRNA binding domain"/>
    <property type="match status" value="1"/>
</dbReference>
<dbReference type="HAMAP" id="MF_00176">
    <property type="entry name" value="Ser_tRNA_synth_type1"/>
    <property type="match status" value="1"/>
</dbReference>
<dbReference type="InterPro" id="IPR002314">
    <property type="entry name" value="aa-tRNA-synt_IIb"/>
</dbReference>
<dbReference type="InterPro" id="IPR006195">
    <property type="entry name" value="aa-tRNA-synth_II"/>
</dbReference>
<dbReference type="InterPro" id="IPR045864">
    <property type="entry name" value="aa-tRNA-synth_II/BPL/LPL"/>
</dbReference>
<dbReference type="InterPro" id="IPR002317">
    <property type="entry name" value="Ser-tRNA-ligase_type_1"/>
</dbReference>
<dbReference type="InterPro" id="IPR015866">
    <property type="entry name" value="Ser-tRNA-synth_1_N"/>
</dbReference>
<dbReference type="InterPro" id="IPR042103">
    <property type="entry name" value="SerRS_1_N_sf"/>
</dbReference>
<dbReference type="InterPro" id="IPR033729">
    <property type="entry name" value="SerRS_core"/>
</dbReference>
<dbReference type="InterPro" id="IPR010978">
    <property type="entry name" value="tRNA-bd_arm"/>
</dbReference>
<dbReference type="NCBIfam" id="TIGR00414">
    <property type="entry name" value="serS"/>
    <property type="match status" value="1"/>
</dbReference>
<dbReference type="PANTHER" id="PTHR43697:SF1">
    <property type="entry name" value="SERINE--TRNA LIGASE"/>
    <property type="match status" value="1"/>
</dbReference>
<dbReference type="PANTHER" id="PTHR43697">
    <property type="entry name" value="SERYL-TRNA SYNTHETASE"/>
    <property type="match status" value="1"/>
</dbReference>
<dbReference type="Pfam" id="PF02403">
    <property type="entry name" value="Seryl_tRNA_N"/>
    <property type="match status" value="1"/>
</dbReference>
<dbReference type="Pfam" id="PF00587">
    <property type="entry name" value="tRNA-synt_2b"/>
    <property type="match status" value="1"/>
</dbReference>
<dbReference type="PIRSF" id="PIRSF001529">
    <property type="entry name" value="Ser-tRNA-synth_IIa"/>
    <property type="match status" value="1"/>
</dbReference>
<dbReference type="PRINTS" id="PR00981">
    <property type="entry name" value="TRNASYNTHSER"/>
</dbReference>
<dbReference type="SUPFAM" id="SSF55681">
    <property type="entry name" value="Class II aaRS and biotin synthetases"/>
    <property type="match status" value="1"/>
</dbReference>
<dbReference type="SUPFAM" id="SSF46589">
    <property type="entry name" value="tRNA-binding arm"/>
    <property type="match status" value="1"/>
</dbReference>
<dbReference type="PROSITE" id="PS50862">
    <property type="entry name" value="AA_TRNA_LIGASE_II"/>
    <property type="match status" value="1"/>
</dbReference>
<sequence>MLDLKYVRANLDAVKTALANRNQETLLAGFEDLEAGRRTVLAEVEELRRKRNEVSGTIAVMKREGKDAADLMADMKEVSGKIKDLESGLKEKEEALNELLMRIPNIPHESVPVGKDENDNVEVKRRGEPRNFDFEPQAHWDIGEGLGILDFERAARITGSRFPLYFGDGALMERALINFMLMTHTTRHGYKEVLPPFIVNRKTMTGTGQLPKFEEDLFKLEGWEYFLIPTAEVPVTNIHAEEILEEEALPLYYTAFTPCFRSEAGSAGKDTRGLIRQHQFNKVEMVKFSHPDNSYDELEGMLQNAETILQELGLPYRVLNLCTGDIGFGAAKTYDLEVWMPQQGVYREISSCSNCEDFQARRANIRFKSKGKKGTSHVHTLNGSGLAVGRSLAAILENYQQADGSVIIPEVLRPFMGGREVIEK</sequence>
<feature type="chain" id="PRO_1000199470" description="Serine--tRNA ligase">
    <location>
        <begin position="1"/>
        <end position="424"/>
    </location>
</feature>
<feature type="binding site" evidence="1">
    <location>
        <begin position="230"/>
        <end position="232"/>
    </location>
    <ligand>
        <name>L-serine</name>
        <dbReference type="ChEBI" id="CHEBI:33384"/>
    </ligand>
</feature>
<feature type="binding site" evidence="1">
    <location>
        <begin position="261"/>
        <end position="263"/>
    </location>
    <ligand>
        <name>ATP</name>
        <dbReference type="ChEBI" id="CHEBI:30616"/>
    </ligand>
</feature>
<feature type="binding site" evidence="1">
    <location>
        <position position="284"/>
    </location>
    <ligand>
        <name>L-serine</name>
        <dbReference type="ChEBI" id="CHEBI:33384"/>
    </ligand>
</feature>
<feature type="binding site" evidence="1">
    <location>
        <begin position="348"/>
        <end position="351"/>
    </location>
    <ligand>
        <name>ATP</name>
        <dbReference type="ChEBI" id="CHEBI:30616"/>
    </ligand>
</feature>
<feature type="binding site" evidence="1">
    <location>
        <position position="384"/>
    </location>
    <ligand>
        <name>L-serine</name>
        <dbReference type="ChEBI" id="CHEBI:33384"/>
    </ligand>
</feature>
<organism>
    <name type="scientific">Desulfatibacillum aliphaticivorans</name>
    <dbReference type="NCBI Taxonomy" id="218208"/>
    <lineage>
        <taxon>Bacteria</taxon>
        <taxon>Pseudomonadati</taxon>
        <taxon>Thermodesulfobacteriota</taxon>
        <taxon>Desulfobacteria</taxon>
        <taxon>Desulfobacterales</taxon>
        <taxon>Desulfatibacillaceae</taxon>
        <taxon>Desulfatibacillum</taxon>
    </lineage>
</organism>
<proteinExistence type="inferred from homology"/>
<reference key="1">
    <citation type="journal article" date="2012" name="Environ. Microbiol.">
        <title>The genome sequence of Desulfatibacillum alkenivorans AK-01: a blueprint for anaerobic alkane oxidation.</title>
        <authorList>
            <person name="Callaghan A.V."/>
            <person name="Morris B.E."/>
            <person name="Pereira I.A."/>
            <person name="McInerney M.J."/>
            <person name="Austin R.N."/>
            <person name="Groves J.T."/>
            <person name="Kukor J.J."/>
            <person name="Suflita J.M."/>
            <person name="Young L.Y."/>
            <person name="Zylstra G.J."/>
            <person name="Wawrik B."/>
        </authorList>
    </citation>
    <scope>NUCLEOTIDE SEQUENCE [LARGE SCALE GENOMIC DNA]</scope>
    <source>
        <strain>AK-01</strain>
    </source>
</reference>
<keyword id="KW-0030">Aminoacyl-tRNA synthetase</keyword>
<keyword id="KW-0067">ATP-binding</keyword>
<keyword id="KW-0963">Cytoplasm</keyword>
<keyword id="KW-0436">Ligase</keyword>
<keyword id="KW-0547">Nucleotide-binding</keyword>
<keyword id="KW-0648">Protein biosynthesis</keyword>
<keyword id="KW-1185">Reference proteome</keyword>
<name>SYS_DESAL</name>
<accession>B8FNA6</accession>
<comment type="function">
    <text evidence="1">Catalyzes the attachment of serine to tRNA(Ser). Is also able to aminoacylate tRNA(Sec) with serine, to form the misacylated tRNA L-seryl-tRNA(Sec), which will be further converted into selenocysteinyl-tRNA(Sec).</text>
</comment>
<comment type="catalytic activity">
    <reaction evidence="1">
        <text>tRNA(Ser) + L-serine + ATP = L-seryl-tRNA(Ser) + AMP + diphosphate + H(+)</text>
        <dbReference type="Rhea" id="RHEA:12292"/>
        <dbReference type="Rhea" id="RHEA-COMP:9669"/>
        <dbReference type="Rhea" id="RHEA-COMP:9703"/>
        <dbReference type="ChEBI" id="CHEBI:15378"/>
        <dbReference type="ChEBI" id="CHEBI:30616"/>
        <dbReference type="ChEBI" id="CHEBI:33019"/>
        <dbReference type="ChEBI" id="CHEBI:33384"/>
        <dbReference type="ChEBI" id="CHEBI:78442"/>
        <dbReference type="ChEBI" id="CHEBI:78533"/>
        <dbReference type="ChEBI" id="CHEBI:456215"/>
        <dbReference type="EC" id="6.1.1.11"/>
    </reaction>
</comment>
<comment type="catalytic activity">
    <reaction evidence="1">
        <text>tRNA(Sec) + L-serine + ATP = L-seryl-tRNA(Sec) + AMP + diphosphate + H(+)</text>
        <dbReference type="Rhea" id="RHEA:42580"/>
        <dbReference type="Rhea" id="RHEA-COMP:9742"/>
        <dbReference type="Rhea" id="RHEA-COMP:10128"/>
        <dbReference type="ChEBI" id="CHEBI:15378"/>
        <dbReference type="ChEBI" id="CHEBI:30616"/>
        <dbReference type="ChEBI" id="CHEBI:33019"/>
        <dbReference type="ChEBI" id="CHEBI:33384"/>
        <dbReference type="ChEBI" id="CHEBI:78442"/>
        <dbReference type="ChEBI" id="CHEBI:78533"/>
        <dbReference type="ChEBI" id="CHEBI:456215"/>
        <dbReference type="EC" id="6.1.1.11"/>
    </reaction>
</comment>
<comment type="pathway">
    <text evidence="1">Aminoacyl-tRNA biosynthesis; selenocysteinyl-tRNA(Sec) biosynthesis; L-seryl-tRNA(Sec) from L-serine and tRNA(Sec): step 1/1.</text>
</comment>
<comment type="subunit">
    <text evidence="1">Homodimer. The tRNA molecule binds across the dimer.</text>
</comment>
<comment type="subcellular location">
    <subcellularLocation>
        <location evidence="1">Cytoplasm</location>
    </subcellularLocation>
</comment>
<comment type="domain">
    <text evidence="1">Consists of two distinct domains, a catalytic core and a N-terminal extension that is involved in tRNA binding.</text>
</comment>
<comment type="similarity">
    <text evidence="1">Belongs to the class-II aminoacyl-tRNA synthetase family. Type-1 seryl-tRNA synthetase subfamily.</text>
</comment>
<gene>
    <name evidence="1" type="primary">serS</name>
    <name type="ordered locus">Dalk_4396</name>
</gene>
<evidence type="ECO:0000255" key="1">
    <source>
        <dbReference type="HAMAP-Rule" id="MF_00176"/>
    </source>
</evidence>
<protein>
    <recommendedName>
        <fullName evidence="1">Serine--tRNA ligase</fullName>
        <ecNumber evidence="1">6.1.1.11</ecNumber>
    </recommendedName>
    <alternativeName>
        <fullName evidence="1">Seryl-tRNA synthetase</fullName>
        <shortName evidence="1">SerRS</shortName>
    </alternativeName>
    <alternativeName>
        <fullName evidence="1">Seryl-tRNA(Ser/Sec) synthetase</fullName>
    </alternativeName>
</protein>